<reference key="1">
    <citation type="journal article" date="2009" name="Stand. Genomic Sci.">
        <title>Complete genome sequence of Methanoculleus marisnigri Romesser et al. 1981 type strain JR1.</title>
        <authorList>
            <person name="Anderson I.J."/>
            <person name="Sieprawska-Lupa M."/>
            <person name="Lapidus A."/>
            <person name="Nolan M."/>
            <person name="Copeland A."/>
            <person name="Glavina Del Rio T."/>
            <person name="Tice H."/>
            <person name="Dalin E."/>
            <person name="Barry K."/>
            <person name="Saunders E."/>
            <person name="Han C."/>
            <person name="Brettin T."/>
            <person name="Detter J.C."/>
            <person name="Bruce D."/>
            <person name="Mikhailova N."/>
            <person name="Pitluck S."/>
            <person name="Hauser L."/>
            <person name="Land M."/>
            <person name="Lucas S."/>
            <person name="Richardson P."/>
            <person name="Whitman W.B."/>
            <person name="Kyrpides N.C."/>
        </authorList>
    </citation>
    <scope>NUCLEOTIDE SEQUENCE [LARGE SCALE GENOMIC DNA]</scope>
    <source>
        <strain>ATCC 35101 / DSM 1498 / JR1</strain>
    </source>
</reference>
<proteinExistence type="inferred from homology"/>
<dbReference type="EMBL" id="CP000562">
    <property type="protein sequence ID" value="ABN56503.1"/>
    <property type="molecule type" value="Genomic_DNA"/>
</dbReference>
<dbReference type="RefSeq" id="WP_011843413.1">
    <property type="nucleotide sequence ID" value="NC_009051.1"/>
</dbReference>
<dbReference type="SMR" id="A3CT03"/>
<dbReference type="STRING" id="368407.Memar_0570"/>
<dbReference type="GeneID" id="4846824"/>
<dbReference type="KEGG" id="mem:Memar_0570"/>
<dbReference type="eggNOG" id="arCOG04097">
    <property type="taxonomic scope" value="Archaea"/>
</dbReference>
<dbReference type="HOGENOM" id="CLU_058591_1_1_2"/>
<dbReference type="OrthoDB" id="9126at2157"/>
<dbReference type="Proteomes" id="UP000002146">
    <property type="component" value="Chromosome"/>
</dbReference>
<dbReference type="GO" id="GO:0022627">
    <property type="term" value="C:cytosolic small ribosomal subunit"/>
    <property type="evidence" value="ECO:0007669"/>
    <property type="project" value="TreeGrafter"/>
</dbReference>
<dbReference type="GO" id="GO:0019843">
    <property type="term" value="F:rRNA binding"/>
    <property type="evidence" value="ECO:0007669"/>
    <property type="project" value="UniProtKB-UniRule"/>
</dbReference>
<dbReference type="GO" id="GO:0003735">
    <property type="term" value="F:structural constituent of ribosome"/>
    <property type="evidence" value="ECO:0007669"/>
    <property type="project" value="InterPro"/>
</dbReference>
<dbReference type="GO" id="GO:0006412">
    <property type="term" value="P:translation"/>
    <property type="evidence" value="ECO:0007669"/>
    <property type="project" value="UniProtKB-UniRule"/>
</dbReference>
<dbReference type="CDD" id="cd02411">
    <property type="entry name" value="KH-II_30S_S3_arch"/>
    <property type="match status" value="1"/>
</dbReference>
<dbReference type="FunFam" id="3.30.300.20:FF:000001">
    <property type="entry name" value="30S ribosomal protein S3"/>
    <property type="match status" value="1"/>
</dbReference>
<dbReference type="Gene3D" id="3.30.300.20">
    <property type="match status" value="1"/>
</dbReference>
<dbReference type="Gene3D" id="3.30.1140.32">
    <property type="entry name" value="Ribosomal protein S3, C-terminal domain"/>
    <property type="match status" value="1"/>
</dbReference>
<dbReference type="HAMAP" id="MF_01309_A">
    <property type="entry name" value="Ribosomal_uS3_A"/>
    <property type="match status" value="1"/>
</dbReference>
<dbReference type="InterPro" id="IPR004087">
    <property type="entry name" value="KH_dom"/>
</dbReference>
<dbReference type="InterPro" id="IPR015946">
    <property type="entry name" value="KH_dom-like_a/b"/>
</dbReference>
<dbReference type="InterPro" id="IPR004044">
    <property type="entry name" value="KH_dom_type_2"/>
</dbReference>
<dbReference type="InterPro" id="IPR009019">
    <property type="entry name" value="KH_sf_prok-type"/>
</dbReference>
<dbReference type="InterPro" id="IPR036419">
    <property type="entry name" value="Ribosomal_S3_C_sf"/>
</dbReference>
<dbReference type="InterPro" id="IPR027488">
    <property type="entry name" value="Ribosomal_uS3_arc"/>
</dbReference>
<dbReference type="InterPro" id="IPR001351">
    <property type="entry name" value="Ribosomal_uS3_C"/>
</dbReference>
<dbReference type="InterPro" id="IPR005703">
    <property type="entry name" value="Ribosomal_uS3_euk/arc"/>
</dbReference>
<dbReference type="NCBIfam" id="NF003219">
    <property type="entry name" value="PRK04191.1"/>
    <property type="match status" value="1"/>
</dbReference>
<dbReference type="NCBIfam" id="TIGR01008">
    <property type="entry name" value="uS3_euk_arch"/>
    <property type="match status" value="1"/>
</dbReference>
<dbReference type="PANTHER" id="PTHR11760">
    <property type="entry name" value="30S/40S RIBOSOMAL PROTEIN S3"/>
    <property type="match status" value="1"/>
</dbReference>
<dbReference type="PANTHER" id="PTHR11760:SF32">
    <property type="entry name" value="SMALL RIBOSOMAL SUBUNIT PROTEIN US3"/>
    <property type="match status" value="1"/>
</dbReference>
<dbReference type="Pfam" id="PF07650">
    <property type="entry name" value="KH_2"/>
    <property type="match status" value="1"/>
</dbReference>
<dbReference type="Pfam" id="PF00189">
    <property type="entry name" value="Ribosomal_S3_C"/>
    <property type="match status" value="1"/>
</dbReference>
<dbReference type="SMART" id="SM00322">
    <property type="entry name" value="KH"/>
    <property type="match status" value="1"/>
</dbReference>
<dbReference type="SUPFAM" id="SSF54814">
    <property type="entry name" value="Prokaryotic type KH domain (KH-domain type II)"/>
    <property type="match status" value="1"/>
</dbReference>
<dbReference type="SUPFAM" id="SSF54821">
    <property type="entry name" value="Ribosomal protein S3 C-terminal domain"/>
    <property type="match status" value="1"/>
</dbReference>
<dbReference type="PROSITE" id="PS50823">
    <property type="entry name" value="KH_TYPE_2"/>
    <property type="match status" value="1"/>
</dbReference>
<gene>
    <name evidence="1" type="primary">rps3</name>
    <name type="ordered locus">Memar_0570</name>
</gene>
<sequence>MAIEKKFITDGVRNVRVEKFLTKELKRAGYGGMDIARTPLGTQVTIFAEKPGIVIGKGGKQVRQLTQDLATDYDIESPQVEVQQVQNPNFNAQIMAERLANALERGWYFRKAGSSTIRRIMESGALGCEVIVAGKLTGSRSRTQKFTEGYIKHCGEPSETIVEKGYALAIKKLGTIGVQVKIVPPDARLPDAFDVLEPEPKKAPAEPIEPEEVGDDVFEEEFEETSEEEYVEEV</sequence>
<comment type="function">
    <text evidence="1">Binds the lower part of the 30S subunit head.</text>
</comment>
<comment type="subunit">
    <text evidence="1">Part of the 30S ribosomal subunit.</text>
</comment>
<comment type="similarity">
    <text evidence="1">Belongs to the universal ribosomal protein uS3 family.</text>
</comment>
<organism>
    <name type="scientific">Methanoculleus marisnigri (strain ATCC 35101 / DSM 1498 / JR1)</name>
    <dbReference type="NCBI Taxonomy" id="368407"/>
    <lineage>
        <taxon>Archaea</taxon>
        <taxon>Methanobacteriati</taxon>
        <taxon>Methanobacteriota</taxon>
        <taxon>Stenosarchaea group</taxon>
        <taxon>Methanomicrobia</taxon>
        <taxon>Methanomicrobiales</taxon>
        <taxon>Methanomicrobiaceae</taxon>
        <taxon>Methanoculleus</taxon>
    </lineage>
</organism>
<feature type="chain" id="PRO_0000293924" description="Small ribosomal subunit protein uS3">
    <location>
        <begin position="1"/>
        <end position="234"/>
    </location>
</feature>
<feature type="domain" description="KH type-2" evidence="1">
    <location>
        <begin position="17"/>
        <end position="86"/>
    </location>
</feature>
<name>RS3_METMJ</name>
<protein>
    <recommendedName>
        <fullName evidence="1">Small ribosomal subunit protein uS3</fullName>
    </recommendedName>
    <alternativeName>
        <fullName evidence="2">30S ribosomal protein S3</fullName>
    </alternativeName>
</protein>
<evidence type="ECO:0000255" key="1">
    <source>
        <dbReference type="HAMAP-Rule" id="MF_01309"/>
    </source>
</evidence>
<evidence type="ECO:0000305" key="2"/>
<keyword id="KW-0687">Ribonucleoprotein</keyword>
<keyword id="KW-0689">Ribosomal protein</keyword>
<keyword id="KW-0694">RNA-binding</keyword>
<keyword id="KW-0699">rRNA-binding</keyword>
<accession>A3CT03</accession>